<reference key="1">
    <citation type="journal article" date="2005" name="Nucleic Acids Res.">
        <title>Genome dynamics and diversity of Shigella species, the etiologic agents of bacillary dysentery.</title>
        <authorList>
            <person name="Yang F."/>
            <person name="Yang J."/>
            <person name="Zhang X."/>
            <person name="Chen L."/>
            <person name="Jiang Y."/>
            <person name="Yan Y."/>
            <person name="Tang X."/>
            <person name="Wang J."/>
            <person name="Xiong Z."/>
            <person name="Dong J."/>
            <person name="Xue Y."/>
            <person name="Zhu Y."/>
            <person name="Xu X."/>
            <person name="Sun L."/>
            <person name="Chen S."/>
            <person name="Nie H."/>
            <person name="Peng J."/>
            <person name="Xu J."/>
            <person name="Wang Y."/>
            <person name="Yuan Z."/>
            <person name="Wen Y."/>
            <person name="Yao Z."/>
            <person name="Shen Y."/>
            <person name="Qiang B."/>
            <person name="Hou Y."/>
            <person name="Yu J."/>
            <person name="Jin Q."/>
        </authorList>
    </citation>
    <scope>NUCLEOTIDE SEQUENCE [LARGE SCALE GENOMIC DNA]</scope>
    <source>
        <strain>Sd197</strain>
    </source>
</reference>
<keyword id="KW-1185">Reference proteome</keyword>
<comment type="similarity">
    <text evidence="1">Belongs to the DsrB family.</text>
</comment>
<protein>
    <recommendedName>
        <fullName evidence="1">Protein DsrB</fullName>
    </recommendedName>
</protein>
<proteinExistence type="inferred from homology"/>
<organism>
    <name type="scientific">Shigella dysenteriae serotype 1 (strain Sd197)</name>
    <dbReference type="NCBI Taxonomy" id="300267"/>
    <lineage>
        <taxon>Bacteria</taxon>
        <taxon>Pseudomonadati</taxon>
        <taxon>Pseudomonadota</taxon>
        <taxon>Gammaproteobacteria</taxon>
        <taxon>Enterobacterales</taxon>
        <taxon>Enterobacteriaceae</taxon>
        <taxon>Shigella</taxon>
    </lineage>
</organism>
<name>DSRB_SHIDS</name>
<gene>
    <name evidence="1" type="primary">dsrB</name>
    <name type="ordered locus">SDY_1053</name>
</gene>
<sequence length="62" mass="6946">MKVNDRVTVKTDGGPRRPGVVLAVEEFSEGTMYLVSLEDYPLGIWFFNEAGHQDGIFVEKAE</sequence>
<feature type="chain" id="PRO_0000300615" description="Protein DsrB">
    <location>
        <begin position="1"/>
        <end position="62"/>
    </location>
</feature>
<dbReference type="EMBL" id="CP000034">
    <property type="protein sequence ID" value="ABB61218.1"/>
    <property type="molecule type" value="Genomic_DNA"/>
</dbReference>
<dbReference type="RefSeq" id="WP_000867217.1">
    <property type="nucleotide sequence ID" value="NC_007606.1"/>
</dbReference>
<dbReference type="RefSeq" id="YP_402709.1">
    <property type="nucleotide sequence ID" value="NC_007606.1"/>
</dbReference>
<dbReference type="SMR" id="Q32HI7"/>
<dbReference type="EnsemblBacteria" id="ABB61218">
    <property type="protein sequence ID" value="ABB61218"/>
    <property type="gene ID" value="SDY_1053"/>
</dbReference>
<dbReference type="GeneID" id="93775233"/>
<dbReference type="KEGG" id="sdy:SDY_1053"/>
<dbReference type="PATRIC" id="fig|300267.13.peg.1230"/>
<dbReference type="HOGENOM" id="CLU_189289_0_0_6"/>
<dbReference type="Proteomes" id="UP000002716">
    <property type="component" value="Chromosome"/>
</dbReference>
<dbReference type="HAMAP" id="MF_01549">
    <property type="entry name" value="DsrB"/>
    <property type="match status" value="1"/>
</dbReference>
<dbReference type="InterPro" id="IPR019717">
    <property type="entry name" value="Dextransucrase_DSRB"/>
</dbReference>
<dbReference type="NCBIfam" id="NF007981">
    <property type="entry name" value="PRK10708.1"/>
    <property type="match status" value="1"/>
</dbReference>
<dbReference type="Pfam" id="PF10781">
    <property type="entry name" value="DSRB"/>
    <property type="match status" value="1"/>
</dbReference>
<evidence type="ECO:0000255" key="1">
    <source>
        <dbReference type="HAMAP-Rule" id="MF_01549"/>
    </source>
</evidence>
<accession>Q32HI7</accession>